<name>COG6_CRYNJ</name>
<organism>
    <name type="scientific">Cryptococcus neoformans var. neoformans serotype D (strain JEC21 / ATCC MYA-565)</name>
    <name type="common">Filobasidiella neoformans</name>
    <dbReference type="NCBI Taxonomy" id="214684"/>
    <lineage>
        <taxon>Eukaryota</taxon>
        <taxon>Fungi</taxon>
        <taxon>Dikarya</taxon>
        <taxon>Basidiomycota</taxon>
        <taxon>Agaricomycotina</taxon>
        <taxon>Tremellomycetes</taxon>
        <taxon>Tremellales</taxon>
        <taxon>Cryptococcaceae</taxon>
        <taxon>Cryptococcus</taxon>
        <taxon>Cryptococcus neoformans species complex</taxon>
    </lineage>
</organism>
<dbReference type="EMBL" id="AE017348">
    <property type="protein sequence ID" value="AAW44937.1"/>
    <property type="molecule type" value="Genomic_DNA"/>
</dbReference>
<dbReference type="RefSeq" id="XP_572244.1">
    <property type="nucleotide sequence ID" value="XM_572244.1"/>
</dbReference>
<dbReference type="SMR" id="P0CM80"/>
<dbReference type="FunCoup" id="P0CM80">
    <property type="interactions" value="244"/>
</dbReference>
<dbReference type="STRING" id="214684.P0CM80"/>
<dbReference type="PaxDb" id="214684-P0CM80"/>
<dbReference type="EnsemblFungi" id="AAW44937">
    <property type="protein sequence ID" value="AAW44937"/>
    <property type="gene ID" value="CNH00520"/>
</dbReference>
<dbReference type="GeneID" id="3259163"/>
<dbReference type="KEGG" id="cne:CNH00520"/>
<dbReference type="VEuPathDB" id="FungiDB:CNH00520"/>
<dbReference type="eggNOG" id="KOG3758">
    <property type="taxonomic scope" value="Eukaryota"/>
</dbReference>
<dbReference type="HOGENOM" id="CLU_011361_2_0_1"/>
<dbReference type="InParanoid" id="P0CM80"/>
<dbReference type="OMA" id="HSCLDFF"/>
<dbReference type="OrthoDB" id="272987at2759"/>
<dbReference type="Proteomes" id="UP000002149">
    <property type="component" value="Chromosome 8"/>
</dbReference>
<dbReference type="GO" id="GO:0000139">
    <property type="term" value="C:Golgi membrane"/>
    <property type="evidence" value="ECO:0007669"/>
    <property type="project" value="UniProtKB-SubCell"/>
</dbReference>
<dbReference type="GO" id="GO:0017119">
    <property type="term" value="C:Golgi transport complex"/>
    <property type="evidence" value="ECO:0000318"/>
    <property type="project" value="GO_Central"/>
</dbReference>
<dbReference type="GO" id="GO:0006891">
    <property type="term" value="P:intra-Golgi vesicle-mediated transport"/>
    <property type="evidence" value="ECO:0000318"/>
    <property type="project" value="GO_Central"/>
</dbReference>
<dbReference type="GO" id="GO:0015031">
    <property type="term" value="P:protein transport"/>
    <property type="evidence" value="ECO:0007669"/>
    <property type="project" value="UniProtKB-KW"/>
</dbReference>
<dbReference type="InterPro" id="IPR010490">
    <property type="entry name" value="COG6"/>
</dbReference>
<dbReference type="InterPro" id="IPR048369">
    <property type="entry name" value="COG6_C"/>
</dbReference>
<dbReference type="InterPro" id="IPR048368">
    <property type="entry name" value="COG6_N"/>
</dbReference>
<dbReference type="PANTHER" id="PTHR21506">
    <property type="entry name" value="COMPONENT OF OLIGOMERIC GOLGI COMPLEX 6"/>
    <property type="match status" value="1"/>
</dbReference>
<dbReference type="PANTHER" id="PTHR21506:SF0">
    <property type="entry name" value="CONSERVED OLIGOMERIC GOLGI COMPLEX SUBUNIT 6"/>
    <property type="match status" value="1"/>
</dbReference>
<dbReference type="Pfam" id="PF20653">
    <property type="entry name" value="COG6_C"/>
    <property type="match status" value="1"/>
</dbReference>
<dbReference type="Pfam" id="PF06419">
    <property type="entry name" value="COG6_N"/>
    <property type="match status" value="1"/>
</dbReference>
<dbReference type="SMART" id="SM01087">
    <property type="entry name" value="COG6"/>
    <property type="match status" value="1"/>
</dbReference>
<feature type="chain" id="PRO_0000339321" description="Conserved oligomeric Golgi complex subunit 6">
    <location>
        <begin position="1"/>
        <end position="742"/>
    </location>
</feature>
<feature type="region of interest" description="Disordered" evidence="2">
    <location>
        <begin position="692"/>
        <end position="742"/>
    </location>
</feature>
<feature type="compositionally biased region" description="Acidic residues" evidence="2">
    <location>
        <begin position="694"/>
        <end position="703"/>
    </location>
</feature>
<feature type="compositionally biased region" description="Basic and acidic residues" evidence="2">
    <location>
        <begin position="720"/>
        <end position="742"/>
    </location>
</feature>
<proteinExistence type="inferred from homology"/>
<evidence type="ECO:0000250" key="1"/>
<evidence type="ECO:0000256" key="2">
    <source>
        <dbReference type="SAM" id="MobiDB-lite"/>
    </source>
</evidence>
<evidence type="ECO:0000305" key="3"/>
<accession>P0CM80</accession>
<accession>Q55JD7</accession>
<accession>Q5KCC2</accession>
<comment type="function">
    <text evidence="1">Acts as a component of the peripheral membrane COG complex that is involved in intra-Golgi protein trafficking. COG is located at the cis-Golgi, and regulates tethering of retrograde intra-Golgi vesicles and possibly a number of other membrane trafficking events (By similarity).</text>
</comment>
<comment type="subcellular location">
    <subcellularLocation>
        <location evidence="1">Golgi apparatus membrane</location>
        <topology evidence="1">Peripheral membrane protein</topology>
    </subcellularLocation>
</comment>
<comment type="similarity">
    <text evidence="3">Belongs to the COG6 family.</text>
</comment>
<sequence length="742" mass="83721">MSTNPNTPAPPASRTNPISLRIYKAIGTSFDDVSSREALEIASGMYGPEDPKAKVKAQPEYEELEEDDDTLPKRRTLKGQSAAIARKYLKQDIETCLATGSTKFLEAFAEVDQKLNVLREHMQEMQVRCDQVQSELDQANSGTKFLLERADVLRSQRDSAQLRAHLITLFLSRFTLSNSELTALTSREVTIGQPLFDALDHVEKIRTDCEVLLSGEEGKAQAGLDIMSLTSEQLESGYSKIHRYCQFEFRQFTREAQLEASSVMRQAICRLRDRPALLADAIQTLTSTRQSSILHQFLDALTRGGPGGLPRPIEIHAHDPTRYVGDMLAWVHQTTATEHEFLEGMFGVKEKKRWVGQERGGEEGEEERMASEVLDKDLEGLSRPLKLRIQETIKSQEGIIMTYKIANLLHFYLVTMRKTIGGKAMLVQTLQEIHDQAYIAFYETLDAQGRGLLRFLHPPDATLTPPITLRDAAQILRELLFVYSTSLIDPAERESDADLAKLLDKAVGPCVEMCERMAEMRRGKSGGGEWERDIFMVNSLGYLEHTLEMYDFTTKTLHMLDEKIKTHVESMTFEHHGKLLESCGLAAVMRTIRTRPEDTPLSRLHATSPKSLTSALSKFSTWISTVDPSTSPRLALLTSPRLAVEIHRKALRKIYDAYGEICERVLDKAEGYEFGETMLRRGRDEVGVALGVGEDWELEEDTEEKSMKQKEQQDEDTEDQGEKGIMQEEHKAQDAGNTEDKA</sequence>
<keyword id="KW-0333">Golgi apparatus</keyword>
<keyword id="KW-0472">Membrane</keyword>
<keyword id="KW-0653">Protein transport</keyword>
<keyword id="KW-1185">Reference proteome</keyword>
<keyword id="KW-0813">Transport</keyword>
<reference key="1">
    <citation type="journal article" date="2005" name="Science">
        <title>The genome of the basidiomycetous yeast and human pathogen Cryptococcus neoformans.</title>
        <authorList>
            <person name="Loftus B.J."/>
            <person name="Fung E."/>
            <person name="Roncaglia P."/>
            <person name="Rowley D."/>
            <person name="Amedeo P."/>
            <person name="Bruno D."/>
            <person name="Vamathevan J."/>
            <person name="Miranda M."/>
            <person name="Anderson I.J."/>
            <person name="Fraser J.A."/>
            <person name="Allen J.E."/>
            <person name="Bosdet I.E."/>
            <person name="Brent M.R."/>
            <person name="Chiu R."/>
            <person name="Doering T.L."/>
            <person name="Donlin M.J."/>
            <person name="D'Souza C.A."/>
            <person name="Fox D.S."/>
            <person name="Grinberg V."/>
            <person name="Fu J."/>
            <person name="Fukushima M."/>
            <person name="Haas B.J."/>
            <person name="Huang J.C."/>
            <person name="Janbon G."/>
            <person name="Jones S.J.M."/>
            <person name="Koo H.L."/>
            <person name="Krzywinski M.I."/>
            <person name="Kwon-Chung K.J."/>
            <person name="Lengeler K.B."/>
            <person name="Maiti R."/>
            <person name="Marra M.A."/>
            <person name="Marra R.E."/>
            <person name="Mathewson C.A."/>
            <person name="Mitchell T.G."/>
            <person name="Pertea M."/>
            <person name="Riggs F.R."/>
            <person name="Salzberg S.L."/>
            <person name="Schein J.E."/>
            <person name="Shvartsbeyn A."/>
            <person name="Shin H."/>
            <person name="Shumway M."/>
            <person name="Specht C.A."/>
            <person name="Suh B.B."/>
            <person name="Tenney A."/>
            <person name="Utterback T.R."/>
            <person name="Wickes B.L."/>
            <person name="Wortman J.R."/>
            <person name="Wye N.H."/>
            <person name="Kronstad J.W."/>
            <person name="Lodge J.K."/>
            <person name="Heitman J."/>
            <person name="Davis R.W."/>
            <person name="Fraser C.M."/>
            <person name="Hyman R.W."/>
        </authorList>
    </citation>
    <scope>NUCLEOTIDE SEQUENCE [LARGE SCALE GENOMIC DNA]</scope>
    <source>
        <strain>JEC21 / ATCC MYA-565</strain>
    </source>
</reference>
<protein>
    <recommendedName>
        <fullName>Conserved oligomeric Golgi complex subunit 6</fullName>
        <shortName>COG complex subunit 6</shortName>
    </recommendedName>
    <alternativeName>
        <fullName>Component of oligomeric Golgi complex 6</fullName>
    </alternativeName>
</protein>
<gene>
    <name type="primary">COG6</name>
    <name type="ordered locus">CNH00520</name>
</gene>